<proteinExistence type="inferred from homology"/>
<name>ACBD7_MOUSE</name>
<organism>
    <name type="scientific">Mus musculus</name>
    <name type="common">Mouse</name>
    <dbReference type="NCBI Taxonomy" id="10090"/>
    <lineage>
        <taxon>Eukaryota</taxon>
        <taxon>Metazoa</taxon>
        <taxon>Chordata</taxon>
        <taxon>Craniata</taxon>
        <taxon>Vertebrata</taxon>
        <taxon>Euteleostomi</taxon>
        <taxon>Mammalia</taxon>
        <taxon>Eutheria</taxon>
        <taxon>Euarchontoglires</taxon>
        <taxon>Glires</taxon>
        <taxon>Rodentia</taxon>
        <taxon>Myomorpha</taxon>
        <taxon>Muroidea</taxon>
        <taxon>Muridae</taxon>
        <taxon>Murinae</taxon>
        <taxon>Mus</taxon>
        <taxon>Mus</taxon>
    </lineage>
</organism>
<evidence type="ECO:0000250" key="1"/>
<evidence type="ECO:0000255" key="2">
    <source>
        <dbReference type="PROSITE-ProRule" id="PRU00573"/>
    </source>
</evidence>
<evidence type="ECO:0000305" key="3"/>
<keyword id="KW-0446">Lipid-binding</keyword>
<keyword id="KW-1185">Reference proteome</keyword>
<protein>
    <recommendedName>
        <fullName>Acyl-CoA-binding domain-containing protein 7</fullName>
    </recommendedName>
</protein>
<gene>
    <name type="primary">Acbd7</name>
</gene>
<feature type="chain" id="PRO_0000288025" description="Acyl-CoA-binding domain-containing protein 7">
    <location>
        <begin position="1"/>
        <end position="88"/>
    </location>
</feature>
<feature type="domain" description="ACB" evidence="2">
    <location>
        <begin position="3"/>
        <end position="88"/>
    </location>
</feature>
<feature type="binding site" evidence="1">
    <location>
        <position position="15"/>
    </location>
    <ligand>
        <name>an acyl-CoA</name>
        <dbReference type="ChEBI" id="CHEBI:58342"/>
    </ligand>
</feature>
<feature type="binding site" evidence="1">
    <location>
        <begin position="30"/>
        <end position="34"/>
    </location>
    <ligand>
        <name>an acyl-CoA</name>
        <dbReference type="ChEBI" id="CHEBI:58342"/>
    </ligand>
</feature>
<feature type="binding site" evidence="1">
    <location>
        <position position="56"/>
    </location>
    <ligand>
        <name>an acyl-CoA</name>
        <dbReference type="ChEBI" id="CHEBI:58342"/>
    </ligand>
</feature>
<feature type="binding site" evidence="1">
    <location>
        <position position="75"/>
    </location>
    <ligand>
        <name>an acyl-CoA</name>
        <dbReference type="ChEBI" id="CHEBI:58342"/>
    </ligand>
</feature>
<feature type="sequence conflict" description="In Ref. 1; BAB32079." evidence="3" ref="1">
    <original>W</original>
    <variation>C</variation>
    <location>
        <position position="57"/>
    </location>
</feature>
<sequence>MSLQADFDQAAQDVRKLKSRPEDEELKELYGLYKQSVIGDINIACPAMLDLKGKAKWEAWNLQKGLSKEDAMCAYISKARELIEKYGI</sequence>
<reference key="1">
    <citation type="journal article" date="2005" name="Science">
        <title>The transcriptional landscape of the mammalian genome.</title>
        <authorList>
            <person name="Carninci P."/>
            <person name="Kasukawa T."/>
            <person name="Katayama S."/>
            <person name="Gough J."/>
            <person name="Frith M.C."/>
            <person name="Maeda N."/>
            <person name="Oyama R."/>
            <person name="Ravasi T."/>
            <person name="Lenhard B."/>
            <person name="Wells C."/>
            <person name="Kodzius R."/>
            <person name="Shimokawa K."/>
            <person name="Bajic V.B."/>
            <person name="Brenner S.E."/>
            <person name="Batalov S."/>
            <person name="Forrest A.R."/>
            <person name="Zavolan M."/>
            <person name="Davis M.J."/>
            <person name="Wilming L.G."/>
            <person name="Aidinis V."/>
            <person name="Allen J.E."/>
            <person name="Ambesi-Impiombato A."/>
            <person name="Apweiler R."/>
            <person name="Aturaliya R.N."/>
            <person name="Bailey T.L."/>
            <person name="Bansal M."/>
            <person name="Baxter L."/>
            <person name="Beisel K.W."/>
            <person name="Bersano T."/>
            <person name="Bono H."/>
            <person name="Chalk A.M."/>
            <person name="Chiu K.P."/>
            <person name="Choudhary V."/>
            <person name="Christoffels A."/>
            <person name="Clutterbuck D.R."/>
            <person name="Crowe M.L."/>
            <person name="Dalla E."/>
            <person name="Dalrymple B.P."/>
            <person name="de Bono B."/>
            <person name="Della Gatta G."/>
            <person name="di Bernardo D."/>
            <person name="Down T."/>
            <person name="Engstrom P."/>
            <person name="Fagiolini M."/>
            <person name="Faulkner G."/>
            <person name="Fletcher C.F."/>
            <person name="Fukushima T."/>
            <person name="Furuno M."/>
            <person name="Futaki S."/>
            <person name="Gariboldi M."/>
            <person name="Georgii-Hemming P."/>
            <person name="Gingeras T.R."/>
            <person name="Gojobori T."/>
            <person name="Green R.E."/>
            <person name="Gustincich S."/>
            <person name="Harbers M."/>
            <person name="Hayashi Y."/>
            <person name="Hensch T.K."/>
            <person name="Hirokawa N."/>
            <person name="Hill D."/>
            <person name="Huminiecki L."/>
            <person name="Iacono M."/>
            <person name="Ikeo K."/>
            <person name="Iwama A."/>
            <person name="Ishikawa T."/>
            <person name="Jakt M."/>
            <person name="Kanapin A."/>
            <person name="Katoh M."/>
            <person name="Kawasawa Y."/>
            <person name="Kelso J."/>
            <person name="Kitamura H."/>
            <person name="Kitano H."/>
            <person name="Kollias G."/>
            <person name="Krishnan S.P."/>
            <person name="Kruger A."/>
            <person name="Kummerfeld S.K."/>
            <person name="Kurochkin I.V."/>
            <person name="Lareau L.F."/>
            <person name="Lazarevic D."/>
            <person name="Lipovich L."/>
            <person name="Liu J."/>
            <person name="Liuni S."/>
            <person name="McWilliam S."/>
            <person name="Madan Babu M."/>
            <person name="Madera M."/>
            <person name="Marchionni L."/>
            <person name="Matsuda H."/>
            <person name="Matsuzawa S."/>
            <person name="Miki H."/>
            <person name="Mignone F."/>
            <person name="Miyake S."/>
            <person name="Morris K."/>
            <person name="Mottagui-Tabar S."/>
            <person name="Mulder N."/>
            <person name="Nakano N."/>
            <person name="Nakauchi H."/>
            <person name="Ng P."/>
            <person name="Nilsson R."/>
            <person name="Nishiguchi S."/>
            <person name="Nishikawa S."/>
            <person name="Nori F."/>
            <person name="Ohara O."/>
            <person name="Okazaki Y."/>
            <person name="Orlando V."/>
            <person name="Pang K.C."/>
            <person name="Pavan W.J."/>
            <person name="Pavesi G."/>
            <person name="Pesole G."/>
            <person name="Petrovsky N."/>
            <person name="Piazza S."/>
            <person name="Reed J."/>
            <person name="Reid J.F."/>
            <person name="Ring B.Z."/>
            <person name="Ringwald M."/>
            <person name="Rost B."/>
            <person name="Ruan Y."/>
            <person name="Salzberg S.L."/>
            <person name="Sandelin A."/>
            <person name="Schneider C."/>
            <person name="Schoenbach C."/>
            <person name="Sekiguchi K."/>
            <person name="Semple C.A."/>
            <person name="Seno S."/>
            <person name="Sessa L."/>
            <person name="Sheng Y."/>
            <person name="Shibata Y."/>
            <person name="Shimada H."/>
            <person name="Shimada K."/>
            <person name="Silva D."/>
            <person name="Sinclair B."/>
            <person name="Sperling S."/>
            <person name="Stupka E."/>
            <person name="Sugiura K."/>
            <person name="Sultana R."/>
            <person name="Takenaka Y."/>
            <person name="Taki K."/>
            <person name="Tammoja K."/>
            <person name="Tan S.L."/>
            <person name="Tang S."/>
            <person name="Taylor M.S."/>
            <person name="Tegner J."/>
            <person name="Teichmann S.A."/>
            <person name="Ueda H.R."/>
            <person name="van Nimwegen E."/>
            <person name="Verardo R."/>
            <person name="Wei C.L."/>
            <person name="Yagi K."/>
            <person name="Yamanishi H."/>
            <person name="Zabarovsky E."/>
            <person name="Zhu S."/>
            <person name="Zimmer A."/>
            <person name="Hide W."/>
            <person name="Bult C."/>
            <person name="Grimmond S.M."/>
            <person name="Teasdale R.D."/>
            <person name="Liu E.T."/>
            <person name="Brusic V."/>
            <person name="Quackenbush J."/>
            <person name="Wahlestedt C."/>
            <person name="Mattick J.S."/>
            <person name="Hume D.A."/>
            <person name="Kai C."/>
            <person name="Sasaki D."/>
            <person name="Tomaru Y."/>
            <person name="Fukuda S."/>
            <person name="Kanamori-Katayama M."/>
            <person name="Suzuki M."/>
            <person name="Aoki J."/>
            <person name="Arakawa T."/>
            <person name="Iida J."/>
            <person name="Imamura K."/>
            <person name="Itoh M."/>
            <person name="Kato T."/>
            <person name="Kawaji H."/>
            <person name="Kawagashira N."/>
            <person name="Kawashima T."/>
            <person name="Kojima M."/>
            <person name="Kondo S."/>
            <person name="Konno H."/>
            <person name="Nakano K."/>
            <person name="Ninomiya N."/>
            <person name="Nishio T."/>
            <person name="Okada M."/>
            <person name="Plessy C."/>
            <person name="Shibata K."/>
            <person name="Shiraki T."/>
            <person name="Suzuki S."/>
            <person name="Tagami M."/>
            <person name="Waki K."/>
            <person name="Watahiki A."/>
            <person name="Okamura-Oho Y."/>
            <person name="Suzuki H."/>
            <person name="Kawai J."/>
            <person name="Hayashizaki Y."/>
        </authorList>
    </citation>
    <scope>NUCLEOTIDE SEQUENCE [LARGE SCALE MRNA]</scope>
    <source>
        <strain>C57BL/6J</strain>
        <tissue>Epididymis</tissue>
    </source>
</reference>
<reference key="2">
    <citation type="journal article" date="2009" name="PLoS Biol.">
        <title>Lineage-specific biology revealed by a finished genome assembly of the mouse.</title>
        <authorList>
            <person name="Church D.M."/>
            <person name="Goodstadt L."/>
            <person name="Hillier L.W."/>
            <person name="Zody M.C."/>
            <person name="Goldstein S."/>
            <person name="She X."/>
            <person name="Bult C.J."/>
            <person name="Agarwala R."/>
            <person name="Cherry J.L."/>
            <person name="DiCuccio M."/>
            <person name="Hlavina W."/>
            <person name="Kapustin Y."/>
            <person name="Meric P."/>
            <person name="Maglott D."/>
            <person name="Birtle Z."/>
            <person name="Marques A.C."/>
            <person name="Graves T."/>
            <person name="Zhou S."/>
            <person name="Teague B."/>
            <person name="Potamousis K."/>
            <person name="Churas C."/>
            <person name="Place M."/>
            <person name="Herschleb J."/>
            <person name="Runnheim R."/>
            <person name="Forrest D."/>
            <person name="Amos-Landgraf J."/>
            <person name="Schwartz D.C."/>
            <person name="Cheng Z."/>
            <person name="Lindblad-Toh K."/>
            <person name="Eichler E.E."/>
            <person name="Ponting C.P."/>
        </authorList>
    </citation>
    <scope>NUCLEOTIDE SEQUENCE [LARGE SCALE GENOMIC DNA]</scope>
    <source>
        <strain>C57BL/6J</strain>
    </source>
</reference>
<accession>Q9D258</accession>
<accession>A2AJG1</accession>
<dbReference type="EMBL" id="AK020348">
    <property type="protein sequence ID" value="BAB32079.1"/>
    <property type="molecule type" value="mRNA"/>
</dbReference>
<dbReference type="EMBL" id="AL732620">
    <property type="status" value="NOT_ANNOTATED_CDS"/>
    <property type="molecule type" value="Genomic_DNA"/>
</dbReference>
<dbReference type="CCDS" id="CCDS50485.1"/>
<dbReference type="RefSeq" id="NP_084339.1">
    <property type="nucleotide sequence ID" value="NM_030063.2"/>
</dbReference>
<dbReference type="SMR" id="Q9D258"/>
<dbReference type="FunCoup" id="Q9D258">
    <property type="interactions" value="30"/>
</dbReference>
<dbReference type="STRING" id="10090.ENSMUSP00000110741"/>
<dbReference type="PhosphoSitePlus" id="Q9D258"/>
<dbReference type="PaxDb" id="10090-ENSMUSP00000110741"/>
<dbReference type="ProteomicsDB" id="285637"/>
<dbReference type="Antibodypedia" id="44133">
    <property type="antibodies" value="148 antibodies from 19 providers"/>
</dbReference>
<dbReference type="Ensembl" id="ENSMUST00000115089.2">
    <property type="protein sequence ID" value="ENSMUSP00000110741.2"/>
    <property type="gene ID" value="ENSMUSG00000026644.8"/>
</dbReference>
<dbReference type="GeneID" id="78245"/>
<dbReference type="KEGG" id="mmu:78245"/>
<dbReference type="UCSC" id="uc008idt.2">
    <property type="organism name" value="mouse"/>
</dbReference>
<dbReference type="AGR" id="MGI:1925495"/>
<dbReference type="CTD" id="414149"/>
<dbReference type="MGI" id="MGI:1925495">
    <property type="gene designation" value="Acbd7"/>
</dbReference>
<dbReference type="VEuPathDB" id="HostDB:ENSMUSG00000026644"/>
<dbReference type="eggNOG" id="KOG0817">
    <property type="taxonomic scope" value="Eukaryota"/>
</dbReference>
<dbReference type="GeneTree" id="ENSGT00940000161184"/>
<dbReference type="HOGENOM" id="CLU_118853_4_1_1"/>
<dbReference type="InParanoid" id="Q9D258"/>
<dbReference type="OMA" id="IACPAML"/>
<dbReference type="PhylomeDB" id="Q9D258"/>
<dbReference type="TreeFam" id="TF335802"/>
<dbReference type="Reactome" id="R-MMU-77289">
    <property type="pathway name" value="Mitochondrial Fatty Acid Beta-Oxidation"/>
</dbReference>
<dbReference type="BioGRID-ORCS" id="78245">
    <property type="hits" value="5 hits in 79 CRISPR screens"/>
</dbReference>
<dbReference type="PRO" id="PR:Q9D258"/>
<dbReference type="Proteomes" id="UP000000589">
    <property type="component" value="Chromosome 2"/>
</dbReference>
<dbReference type="RNAct" id="Q9D258">
    <property type="molecule type" value="protein"/>
</dbReference>
<dbReference type="Bgee" id="ENSMUSG00000026644">
    <property type="expression patterns" value="Expressed in olfactory epithelium and 74 other cell types or tissues"/>
</dbReference>
<dbReference type="ExpressionAtlas" id="Q9D258">
    <property type="expression patterns" value="baseline and differential"/>
</dbReference>
<dbReference type="GO" id="GO:0000062">
    <property type="term" value="F:fatty-acyl-CoA binding"/>
    <property type="evidence" value="ECO:0007669"/>
    <property type="project" value="InterPro"/>
</dbReference>
<dbReference type="GO" id="GO:0097009">
    <property type="term" value="P:energy homeostasis"/>
    <property type="evidence" value="ECO:0000315"/>
    <property type="project" value="MGI"/>
</dbReference>
<dbReference type="GO" id="GO:0007186">
    <property type="term" value="P:G protein-coupled receptor signaling pathway"/>
    <property type="evidence" value="ECO:0000315"/>
    <property type="project" value="MGI"/>
</dbReference>
<dbReference type="GO" id="GO:0010467">
    <property type="term" value="P:gene expression"/>
    <property type="evidence" value="ECO:0000314"/>
    <property type="project" value="MGI"/>
</dbReference>
<dbReference type="GO" id="GO:0033210">
    <property type="term" value="P:leptin-mediated signaling pathway"/>
    <property type="evidence" value="ECO:0000315"/>
    <property type="project" value="MGI"/>
</dbReference>
<dbReference type="GO" id="GO:0032094">
    <property type="term" value="P:response to food"/>
    <property type="evidence" value="ECO:0000315"/>
    <property type="project" value="MGI"/>
</dbReference>
<dbReference type="Gene3D" id="1.20.80.10">
    <property type="match status" value="1"/>
</dbReference>
<dbReference type="InterPro" id="IPR000582">
    <property type="entry name" value="Acyl-CoA-binding_protein"/>
</dbReference>
<dbReference type="InterPro" id="IPR035984">
    <property type="entry name" value="Acyl-CoA-binding_sf"/>
</dbReference>
<dbReference type="InterPro" id="IPR014352">
    <property type="entry name" value="FERM/acyl-CoA-bd_prot_sf"/>
</dbReference>
<dbReference type="PANTHER" id="PTHR23310:SF51">
    <property type="entry name" value="ACYL-COA-BINDING DOMAIN-CONTAINING PROTEIN 7"/>
    <property type="match status" value="1"/>
</dbReference>
<dbReference type="PANTHER" id="PTHR23310">
    <property type="entry name" value="ACYL-COA-BINDING PROTEIN, ACBP"/>
    <property type="match status" value="1"/>
</dbReference>
<dbReference type="Pfam" id="PF00887">
    <property type="entry name" value="ACBP"/>
    <property type="match status" value="1"/>
</dbReference>
<dbReference type="PRINTS" id="PR00689">
    <property type="entry name" value="ACOABINDINGP"/>
</dbReference>
<dbReference type="SUPFAM" id="SSF47027">
    <property type="entry name" value="Acyl-CoA binding protein"/>
    <property type="match status" value="1"/>
</dbReference>
<dbReference type="PROSITE" id="PS51228">
    <property type="entry name" value="ACB_2"/>
    <property type="match status" value="1"/>
</dbReference>
<comment type="function">
    <text evidence="1">Binds medium- and long-chain acyl-CoA esters.</text>
</comment>
<comment type="similarity">
    <text evidence="3">Belongs to the ACBD7 family.</text>
</comment>